<sequence length="466" mass="51267">MSEQKSSNQMWGGRFASGPDAIMEEINASIGFDRKLYAQDIQGSLAHAAMLAKTGIIAAEDHKQIENGLKTIRKEIEEGKFTFSRKLEDIHMNIEARLAELIGPAAGRLHTARSRNDQVAVDFRLWVKQELEKTAAALKNLIEAFLERAEEHAATVMPGFTHLQTAQPVTFGHHCMAYVEMFGRDLSRVRDAIERIDESPLGAAALAGTGFPIDRHMTAKALGFREPTRNSLDSVSDRDYALEFLSLAAICAGHLSRLAEEIVIWSTPQFNFVRLSDAFSTGSSIMPQKKNPDAAELVRAKTGRINGSLVALLTIMKGLPLAYSKDMQEDKEQVFDAAENLELAIAAMAGMVRDLTVNVAAMKKAAGSGYSTATDLADWLVRTLGLPFREAHHVTGRAVALAESRKVDLAKLSLEELQSINPAITAEVFGYLTVEKSVKSRQSFGGTAPQEVRRQIRYWKKRIAKA</sequence>
<dbReference type="EC" id="4.3.2.1" evidence="1"/>
<dbReference type="EMBL" id="CP000887">
    <property type="protein sequence ID" value="ACD73342.1"/>
    <property type="molecule type" value="Genomic_DNA"/>
</dbReference>
<dbReference type="RefSeq" id="WP_002965047.1">
    <property type="nucleotide sequence ID" value="NC_010742.1"/>
</dbReference>
<dbReference type="SMR" id="B2S8N8"/>
<dbReference type="GeneID" id="93017699"/>
<dbReference type="KEGG" id="bmc:BAbS19_I18600"/>
<dbReference type="HOGENOM" id="CLU_027272_2_3_5"/>
<dbReference type="UniPathway" id="UPA00068">
    <property type="reaction ID" value="UER00114"/>
</dbReference>
<dbReference type="Proteomes" id="UP000002565">
    <property type="component" value="Chromosome 1"/>
</dbReference>
<dbReference type="GO" id="GO:0005829">
    <property type="term" value="C:cytosol"/>
    <property type="evidence" value="ECO:0007669"/>
    <property type="project" value="TreeGrafter"/>
</dbReference>
<dbReference type="GO" id="GO:0004056">
    <property type="term" value="F:argininosuccinate lyase activity"/>
    <property type="evidence" value="ECO:0007669"/>
    <property type="project" value="UniProtKB-UniRule"/>
</dbReference>
<dbReference type="GO" id="GO:0042450">
    <property type="term" value="P:arginine biosynthetic process via ornithine"/>
    <property type="evidence" value="ECO:0007669"/>
    <property type="project" value="InterPro"/>
</dbReference>
<dbReference type="GO" id="GO:0006526">
    <property type="term" value="P:L-arginine biosynthetic process"/>
    <property type="evidence" value="ECO:0007669"/>
    <property type="project" value="UniProtKB-UniRule"/>
</dbReference>
<dbReference type="CDD" id="cd01359">
    <property type="entry name" value="Argininosuccinate_lyase"/>
    <property type="match status" value="1"/>
</dbReference>
<dbReference type="FunFam" id="1.10.275.10:FF:000002">
    <property type="entry name" value="Argininosuccinate lyase"/>
    <property type="match status" value="1"/>
</dbReference>
<dbReference type="FunFam" id="1.10.40.30:FF:000001">
    <property type="entry name" value="Argininosuccinate lyase"/>
    <property type="match status" value="1"/>
</dbReference>
<dbReference type="FunFam" id="1.20.200.10:FF:000015">
    <property type="entry name" value="argininosuccinate lyase isoform X2"/>
    <property type="match status" value="1"/>
</dbReference>
<dbReference type="Gene3D" id="1.10.40.30">
    <property type="entry name" value="Fumarase/aspartase (C-terminal domain)"/>
    <property type="match status" value="1"/>
</dbReference>
<dbReference type="Gene3D" id="1.20.200.10">
    <property type="entry name" value="Fumarase/aspartase (Central domain)"/>
    <property type="match status" value="1"/>
</dbReference>
<dbReference type="Gene3D" id="1.10.275.10">
    <property type="entry name" value="Fumarase/aspartase (N-terminal domain)"/>
    <property type="match status" value="1"/>
</dbReference>
<dbReference type="HAMAP" id="MF_00006">
    <property type="entry name" value="Arg_succ_lyase"/>
    <property type="match status" value="1"/>
</dbReference>
<dbReference type="InterPro" id="IPR029419">
    <property type="entry name" value="Arg_succ_lyase_C"/>
</dbReference>
<dbReference type="InterPro" id="IPR009049">
    <property type="entry name" value="Argininosuccinate_lyase"/>
</dbReference>
<dbReference type="InterPro" id="IPR024083">
    <property type="entry name" value="Fumarase/histidase_N"/>
</dbReference>
<dbReference type="InterPro" id="IPR020557">
    <property type="entry name" value="Fumarate_lyase_CS"/>
</dbReference>
<dbReference type="InterPro" id="IPR000362">
    <property type="entry name" value="Fumarate_lyase_fam"/>
</dbReference>
<dbReference type="InterPro" id="IPR022761">
    <property type="entry name" value="Fumarate_lyase_N"/>
</dbReference>
<dbReference type="InterPro" id="IPR008948">
    <property type="entry name" value="L-Aspartase-like"/>
</dbReference>
<dbReference type="NCBIfam" id="TIGR00838">
    <property type="entry name" value="argH"/>
    <property type="match status" value="1"/>
</dbReference>
<dbReference type="PANTHER" id="PTHR43814">
    <property type="entry name" value="ARGININOSUCCINATE LYASE"/>
    <property type="match status" value="1"/>
</dbReference>
<dbReference type="PANTHER" id="PTHR43814:SF1">
    <property type="entry name" value="ARGININOSUCCINATE LYASE"/>
    <property type="match status" value="1"/>
</dbReference>
<dbReference type="Pfam" id="PF14698">
    <property type="entry name" value="ASL_C2"/>
    <property type="match status" value="1"/>
</dbReference>
<dbReference type="Pfam" id="PF00206">
    <property type="entry name" value="Lyase_1"/>
    <property type="match status" value="1"/>
</dbReference>
<dbReference type="PRINTS" id="PR00145">
    <property type="entry name" value="ARGSUCLYASE"/>
</dbReference>
<dbReference type="PRINTS" id="PR00149">
    <property type="entry name" value="FUMRATELYASE"/>
</dbReference>
<dbReference type="SUPFAM" id="SSF48557">
    <property type="entry name" value="L-aspartase-like"/>
    <property type="match status" value="1"/>
</dbReference>
<dbReference type="PROSITE" id="PS00163">
    <property type="entry name" value="FUMARATE_LYASES"/>
    <property type="match status" value="1"/>
</dbReference>
<proteinExistence type="inferred from homology"/>
<evidence type="ECO:0000255" key="1">
    <source>
        <dbReference type="HAMAP-Rule" id="MF_00006"/>
    </source>
</evidence>
<reference key="1">
    <citation type="journal article" date="2008" name="PLoS ONE">
        <title>Genome sequence of Brucella abortus vaccine strain S19 compared to virulent strains yields candidate virulence genes.</title>
        <authorList>
            <person name="Crasta O.R."/>
            <person name="Folkerts O."/>
            <person name="Fei Z."/>
            <person name="Mane S.P."/>
            <person name="Evans C."/>
            <person name="Martino-Catt S."/>
            <person name="Bricker B."/>
            <person name="Yu G."/>
            <person name="Du L."/>
            <person name="Sobral B.W."/>
        </authorList>
    </citation>
    <scope>NUCLEOTIDE SEQUENCE [LARGE SCALE GENOMIC DNA]</scope>
    <source>
        <strain>S19</strain>
    </source>
</reference>
<comment type="catalytic activity">
    <reaction evidence="1">
        <text>2-(N(omega)-L-arginino)succinate = fumarate + L-arginine</text>
        <dbReference type="Rhea" id="RHEA:24020"/>
        <dbReference type="ChEBI" id="CHEBI:29806"/>
        <dbReference type="ChEBI" id="CHEBI:32682"/>
        <dbReference type="ChEBI" id="CHEBI:57472"/>
        <dbReference type="EC" id="4.3.2.1"/>
    </reaction>
</comment>
<comment type="pathway">
    <text evidence="1">Amino-acid biosynthesis; L-arginine biosynthesis; L-arginine from L-ornithine and carbamoyl phosphate: step 3/3.</text>
</comment>
<comment type="subcellular location">
    <subcellularLocation>
        <location evidence="1">Cytoplasm</location>
    </subcellularLocation>
</comment>
<comment type="similarity">
    <text evidence="1">Belongs to the lyase 1 family. Argininosuccinate lyase subfamily.</text>
</comment>
<keyword id="KW-0028">Amino-acid biosynthesis</keyword>
<keyword id="KW-0055">Arginine biosynthesis</keyword>
<keyword id="KW-0963">Cytoplasm</keyword>
<keyword id="KW-0456">Lyase</keyword>
<protein>
    <recommendedName>
        <fullName evidence="1">Argininosuccinate lyase</fullName>
        <shortName evidence="1">ASAL</shortName>
        <ecNumber evidence="1">4.3.2.1</ecNumber>
    </recommendedName>
    <alternativeName>
        <fullName evidence="1">Arginosuccinase</fullName>
    </alternativeName>
</protein>
<name>ARLY_BRUA1</name>
<accession>B2S8N8</accession>
<gene>
    <name evidence="1" type="primary">argH</name>
    <name type="ordered locus">BAbS19_I18600</name>
</gene>
<feature type="chain" id="PRO_1000089068" description="Argininosuccinate lyase">
    <location>
        <begin position="1"/>
        <end position="466"/>
    </location>
</feature>
<organism>
    <name type="scientific">Brucella abortus (strain S19)</name>
    <dbReference type="NCBI Taxonomy" id="430066"/>
    <lineage>
        <taxon>Bacteria</taxon>
        <taxon>Pseudomonadati</taxon>
        <taxon>Pseudomonadota</taxon>
        <taxon>Alphaproteobacteria</taxon>
        <taxon>Hyphomicrobiales</taxon>
        <taxon>Brucellaceae</taxon>
        <taxon>Brucella/Ochrobactrum group</taxon>
        <taxon>Brucella</taxon>
    </lineage>
</organism>